<comment type="function">
    <text evidence="1">Assembles around the rod to form the L-ring and probably protects the motor/basal body from shearing forces during rotation.</text>
</comment>
<comment type="subunit">
    <text evidence="1">The basal body constitutes a major portion of the flagellar organelle and consists of four rings (L,P,S, and M) mounted on a central rod.</text>
</comment>
<comment type="subcellular location">
    <subcellularLocation>
        <location evidence="1">Periplasm</location>
    </subcellularLocation>
    <subcellularLocation>
        <location evidence="1">Bacterial flagellum basal body</location>
    </subcellularLocation>
</comment>
<comment type="similarity">
    <text evidence="1">Belongs to the FlgI family.</text>
</comment>
<accession>Q02IQ1</accession>
<organism>
    <name type="scientific">Pseudomonas aeruginosa (strain UCBPP-PA14)</name>
    <dbReference type="NCBI Taxonomy" id="208963"/>
    <lineage>
        <taxon>Bacteria</taxon>
        <taxon>Pseudomonadati</taxon>
        <taxon>Pseudomonadota</taxon>
        <taxon>Gammaproteobacteria</taxon>
        <taxon>Pseudomonadales</taxon>
        <taxon>Pseudomonadaceae</taxon>
        <taxon>Pseudomonas</taxon>
    </lineage>
</organism>
<sequence>MTKFKHLLALAALLLAAGAAQAERLKDIASIQGVRTNQLIGYGLVVGLSGSGDQTTQTPFTLQTFNNMLAQFGIKVPANVGNVQLKNVAAVSVHADLPPFAKPGQPIDVTVSSIGNAKSLRGGSLLMTPLKGIDGQVYAVAQGNLVVGGFDAEGRDGSKITVNVPSAGRIPAGATVERAVPSGFDQGNSLTLNLNRPDFTTAKRIVDRINELLGPGVAHAVDGGSVRVSAPLDPNQRVDYLSILENLDVQPGEAVAKVIINSRTGTIVIGQNVKVSPAAVTHGSLTVSITEDPIVSQPGAFSNGQTAVVPRSRVNAEEETKPMFKFGPGTTLDDIVRAVNQVGAAPSDLMAILEALKQAGALQADLIVI</sequence>
<evidence type="ECO:0000255" key="1">
    <source>
        <dbReference type="HAMAP-Rule" id="MF_00416"/>
    </source>
</evidence>
<reference key="1">
    <citation type="journal article" date="2006" name="Genome Biol.">
        <title>Genomic analysis reveals that Pseudomonas aeruginosa virulence is combinatorial.</title>
        <authorList>
            <person name="Lee D.G."/>
            <person name="Urbach J.M."/>
            <person name="Wu G."/>
            <person name="Liberati N.T."/>
            <person name="Feinbaum R.L."/>
            <person name="Miyata S."/>
            <person name="Diggins L.T."/>
            <person name="He J."/>
            <person name="Saucier M."/>
            <person name="Deziel E."/>
            <person name="Friedman L."/>
            <person name="Li L."/>
            <person name="Grills G."/>
            <person name="Montgomery K."/>
            <person name="Kucherlapati R."/>
            <person name="Rahme L.G."/>
            <person name="Ausubel F.M."/>
        </authorList>
    </citation>
    <scope>NUCLEOTIDE SEQUENCE [LARGE SCALE GENOMIC DNA]</scope>
    <source>
        <strain>UCBPP-PA14</strain>
    </source>
</reference>
<feature type="signal peptide" evidence="1">
    <location>
        <begin position="1"/>
        <end position="22"/>
    </location>
</feature>
<feature type="chain" id="PRO_1000050114" description="Flagellar P-ring protein">
    <location>
        <begin position="23"/>
        <end position="369"/>
    </location>
</feature>
<keyword id="KW-0975">Bacterial flagellum</keyword>
<keyword id="KW-0574">Periplasm</keyword>
<keyword id="KW-0732">Signal</keyword>
<name>FLGI_PSEAB</name>
<proteinExistence type="inferred from homology"/>
<gene>
    <name evidence="1" type="primary">flgI</name>
    <name type="ordered locus">PA14_50410</name>
</gene>
<protein>
    <recommendedName>
        <fullName evidence="1">Flagellar P-ring protein</fullName>
    </recommendedName>
    <alternativeName>
        <fullName evidence="1">Basal body P-ring protein</fullName>
    </alternativeName>
</protein>
<dbReference type="EMBL" id="CP000438">
    <property type="protein sequence ID" value="ABJ10249.1"/>
    <property type="molecule type" value="Genomic_DNA"/>
</dbReference>
<dbReference type="RefSeq" id="WP_003082169.1">
    <property type="nucleotide sequence ID" value="NZ_CP034244.1"/>
</dbReference>
<dbReference type="SMR" id="Q02IQ1"/>
<dbReference type="KEGG" id="pau:PA14_50410"/>
<dbReference type="PseudoCAP" id="PA14_50410"/>
<dbReference type="HOGENOM" id="CLU_045235_1_0_6"/>
<dbReference type="BioCyc" id="PAER208963:G1G74-4229-MONOMER"/>
<dbReference type="Proteomes" id="UP000000653">
    <property type="component" value="Chromosome"/>
</dbReference>
<dbReference type="GO" id="GO:0009428">
    <property type="term" value="C:bacterial-type flagellum basal body, distal rod, P ring"/>
    <property type="evidence" value="ECO:0007669"/>
    <property type="project" value="InterPro"/>
</dbReference>
<dbReference type="GO" id="GO:0030288">
    <property type="term" value="C:outer membrane-bounded periplasmic space"/>
    <property type="evidence" value="ECO:0007669"/>
    <property type="project" value="InterPro"/>
</dbReference>
<dbReference type="GO" id="GO:0005198">
    <property type="term" value="F:structural molecule activity"/>
    <property type="evidence" value="ECO:0007669"/>
    <property type="project" value="InterPro"/>
</dbReference>
<dbReference type="GO" id="GO:0071973">
    <property type="term" value="P:bacterial-type flagellum-dependent cell motility"/>
    <property type="evidence" value="ECO:0007669"/>
    <property type="project" value="InterPro"/>
</dbReference>
<dbReference type="HAMAP" id="MF_00416">
    <property type="entry name" value="FlgI"/>
    <property type="match status" value="1"/>
</dbReference>
<dbReference type="InterPro" id="IPR001782">
    <property type="entry name" value="Flag_FlgI"/>
</dbReference>
<dbReference type="NCBIfam" id="NF003676">
    <property type="entry name" value="PRK05303.1"/>
    <property type="match status" value="1"/>
</dbReference>
<dbReference type="PANTHER" id="PTHR30381">
    <property type="entry name" value="FLAGELLAR P-RING PERIPLASMIC PROTEIN FLGI"/>
    <property type="match status" value="1"/>
</dbReference>
<dbReference type="PANTHER" id="PTHR30381:SF0">
    <property type="entry name" value="FLAGELLAR P-RING PROTEIN"/>
    <property type="match status" value="1"/>
</dbReference>
<dbReference type="Pfam" id="PF02119">
    <property type="entry name" value="FlgI"/>
    <property type="match status" value="1"/>
</dbReference>
<dbReference type="PRINTS" id="PR01010">
    <property type="entry name" value="FLGPRINGFLGI"/>
</dbReference>